<proteinExistence type="inferred from homology"/>
<organism>
    <name type="scientific">Psychromonas ingrahamii (strain DSM 17664 / CCUG 51855 / 37)</name>
    <dbReference type="NCBI Taxonomy" id="357804"/>
    <lineage>
        <taxon>Bacteria</taxon>
        <taxon>Pseudomonadati</taxon>
        <taxon>Pseudomonadota</taxon>
        <taxon>Gammaproteobacteria</taxon>
        <taxon>Alteromonadales</taxon>
        <taxon>Psychromonadaceae</taxon>
        <taxon>Psychromonas</taxon>
    </lineage>
</organism>
<keyword id="KW-0227">DNA damage</keyword>
<keyword id="KW-0234">DNA repair</keyword>
<keyword id="KW-0238">DNA-binding</keyword>
<keyword id="KW-0326">Glycosidase</keyword>
<keyword id="KW-0378">Hydrolase</keyword>
<keyword id="KW-0456">Lyase</keyword>
<keyword id="KW-0479">Metal-binding</keyword>
<keyword id="KW-0511">Multifunctional enzyme</keyword>
<keyword id="KW-1185">Reference proteome</keyword>
<keyword id="KW-0862">Zinc</keyword>
<keyword id="KW-0863">Zinc-finger</keyword>
<comment type="function">
    <text evidence="2">Involved in base excision repair of DNA damaged by oxidation or by mutagenic agents. Acts as a DNA glycosylase that recognizes and removes damaged bases. Has a preference for oxidized purines, such as 7,8-dihydro-8-oxoguanine (8-oxoG). Has AP (apurinic/apyrimidinic) lyase activity and introduces nicks in the DNA strand. Cleaves the DNA backbone by beta-delta elimination to generate a single-strand break at the site of the removed base with both 3'- and 5'-phosphates.</text>
</comment>
<comment type="catalytic activity">
    <reaction evidence="2">
        <text>Hydrolysis of DNA containing ring-opened 7-methylguanine residues, releasing 2,6-diamino-4-hydroxy-5-(N-methyl)formamidopyrimidine.</text>
        <dbReference type="EC" id="3.2.2.23"/>
    </reaction>
</comment>
<comment type="catalytic activity">
    <reaction evidence="2">
        <text>2'-deoxyribonucleotide-(2'-deoxyribose 5'-phosphate)-2'-deoxyribonucleotide-DNA = a 3'-end 2'-deoxyribonucleotide-(2,3-dehydro-2,3-deoxyribose 5'-phosphate)-DNA + a 5'-end 5'-phospho-2'-deoxyribonucleoside-DNA + H(+)</text>
        <dbReference type="Rhea" id="RHEA:66592"/>
        <dbReference type="Rhea" id="RHEA-COMP:13180"/>
        <dbReference type="Rhea" id="RHEA-COMP:16897"/>
        <dbReference type="Rhea" id="RHEA-COMP:17067"/>
        <dbReference type="ChEBI" id="CHEBI:15378"/>
        <dbReference type="ChEBI" id="CHEBI:136412"/>
        <dbReference type="ChEBI" id="CHEBI:157695"/>
        <dbReference type="ChEBI" id="CHEBI:167181"/>
        <dbReference type="EC" id="4.2.99.18"/>
    </reaction>
</comment>
<comment type="cofactor">
    <cofactor evidence="2">
        <name>Zn(2+)</name>
        <dbReference type="ChEBI" id="CHEBI:29105"/>
    </cofactor>
    <text evidence="2">Binds 1 zinc ion per subunit.</text>
</comment>
<comment type="subunit">
    <text evidence="2">Monomer.</text>
</comment>
<comment type="similarity">
    <text evidence="2">Belongs to the FPG family.</text>
</comment>
<reference key="1">
    <citation type="journal article" date="2008" name="BMC Genomics">
        <title>Genomics of an extreme psychrophile, Psychromonas ingrahamii.</title>
        <authorList>
            <person name="Riley M."/>
            <person name="Staley J.T."/>
            <person name="Danchin A."/>
            <person name="Wang T.Z."/>
            <person name="Brettin T.S."/>
            <person name="Hauser L.J."/>
            <person name="Land M.L."/>
            <person name="Thompson L.S."/>
        </authorList>
    </citation>
    <scope>NUCLEOTIDE SEQUENCE [LARGE SCALE GENOMIC DNA]</scope>
    <source>
        <strain>DSM 17664 / CCUG 51855 / 37</strain>
    </source>
</reference>
<dbReference type="EC" id="3.2.2.23" evidence="2"/>
<dbReference type="EC" id="4.2.99.18" evidence="2"/>
<dbReference type="EMBL" id="CP000510">
    <property type="protein sequence ID" value="ABM01927.1"/>
    <property type="molecule type" value="Genomic_DNA"/>
</dbReference>
<dbReference type="RefSeq" id="WP_011768486.1">
    <property type="nucleotide sequence ID" value="NC_008709.1"/>
</dbReference>
<dbReference type="SMR" id="A1SR12"/>
<dbReference type="STRING" id="357804.Ping_0053"/>
<dbReference type="KEGG" id="pin:Ping_0053"/>
<dbReference type="eggNOG" id="COG0266">
    <property type="taxonomic scope" value="Bacteria"/>
</dbReference>
<dbReference type="HOGENOM" id="CLU_038423_1_1_6"/>
<dbReference type="OrthoDB" id="9800855at2"/>
<dbReference type="Proteomes" id="UP000000639">
    <property type="component" value="Chromosome"/>
</dbReference>
<dbReference type="GO" id="GO:0034039">
    <property type="term" value="F:8-oxo-7,8-dihydroguanine DNA N-glycosylase activity"/>
    <property type="evidence" value="ECO:0007669"/>
    <property type="project" value="TreeGrafter"/>
</dbReference>
<dbReference type="GO" id="GO:0140078">
    <property type="term" value="F:class I DNA-(apurinic or apyrimidinic site) endonuclease activity"/>
    <property type="evidence" value="ECO:0007669"/>
    <property type="project" value="UniProtKB-EC"/>
</dbReference>
<dbReference type="GO" id="GO:0003684">
    <property type="term" value="F:damaged DNA binding"/>
    <property type="evidence" value="ECO:0007669"/>
    <property type="project" value="InterPro"/>
</dbReference>
<dbReference type="GO" id="GO:0008270">
    <property type="term" value="F:zinc ion binding"/>
    <property type="evidence" value="ECO:0007669"/>
    <property type="project" value="UniProtKB-UniRule"/>
</dbReference>
<dbReference type="GO" id="GO:0006284">
    <property type="term" value="P:base-excision repair"/>
    <property type="evidence" value="ECO:0007669"/>
    <property type="project" value="InterPro"/>
</dbReference>
<dbReference type="CDD" id="cd08966">
    <property type="entry name" value="EcFpg-like_N"/>
    <property type="match status" value="1"/>
</dbReference>
<dbReference type="FunFam" id="1.10.8.50:FF:000003">
    <property type="entry name" value="Formamidopyrimidine-DNA glycosylase"/>
    <property type="match status" value="1"/>
</dbReference>
<dbReference type="FunFam" id="3.20.190.10:FF:000001">
    <property type="entry name" value="Formamidopyrimidine-DNA glycosylase"/>
    <property type="match status" value="1"/>
</dbReference>
<dbReference type="Gene3D" id="1.10.8.50">
    <property type="match status" value="1"/>
</dbReference>
<dbReference type="Gene3D" id="3.20.190.10">
    <property type="entry name" value="MutM-like, N-terminal"/>
    <property type="match status" value="1"/>
</dbReference>
<dbReference type="HAMAP" id="MF_00103">
    <property type="entry name" value="Fapy_DNA_glycosyl"/>
    <property type="match status" value="1"/>
</dbReference>
<dbReference type="InterPro" id="IPR015886">
    <property type="entry name" value="DNA_glyclase/AP_lyase_DNA-bd"/>
</dbReference>
<dbReference type="InterPro" id="IPR020629">
    <property type="entry name" value="Formamido-pyr_DNA_Glyclase"/>
</dbReference>
<dbReference type="InterPro" id="IPR012319">
    <property type="entry name" value="FPG_cat"/>
</dbReference>
<dbReference type="InterPro" id="IPR035937">
    <property type="entry name" value="MutM-like_N-ter"/>
</dbReference>
<dbReference type="InterPro" id="IPR010979">
    <property type="entry name" value="Ribosomal_uS13-like_H2TH"/>
</dbReference>
<dbReference type="InterPro" id="IPR000214">
    <property type="entry name" value="Znf_DNA_glyclase/AP_lyase"/>
</dbReference>
<dbReference type="InterPro" id="IPR010663">
    <property type="entry name" value="Znf_FPG/IleRS"/>
</dbReference>
<dbReference type="NCBIfam" id="TIGR00577">
    <property type="entry name" value="fpg"/>
    <property type="match status" value="1"/>
</dbReference>
<dbReference type="NCBIfam" id="NF002211">
    <property type="entry name" value="PRK01103.1"/>
    <property type="match status" value="1"/>
</dbReference>
<dbReference type="PANTHER" id="PTHR22993">
    <property type="entry name" value="FORMAMIDOPYRIMIDINE-DNA GLYCOSYLASE"/>
    <property type="match status" value="1"/>
</dbReference>
<dbReference type="PANTHER" id="PTHR22993:SF9">
    <property type="entry name" value="FORMAMIDOPYRIMIDINE-DNA GLYCOSYLASE"/>
    <property type="match status" value="1"/>
</dbReference>
<dbReference type="Pfam" id="PF01149">
    <property type="entry name" value="Fapy_DNA_glyco"/>
    <property type="match status" value="1"/>
</dbReference>
<dbReference type="Pfam" id="PF06831">
    <property type="entry name" value="H2TH"/>
    <property type="match status" value="1"/>
</dbReference>
<dbReference type="Pfam" id="PF06827">
    <property type="entry name" value="zf-FPG_IleRS"/>
    <property type="match status" value="1"/>
</dbReference>
<dbReference type="SMART" id="SM00898">
    <property type="entry name" value="Fapy_DNA_glyco"/>
    <property type="match status" value="1"/>
</dbReference>
<dbReference type="SMART" id="SM01232">
    <property type="entry name" value="H2TH"/>
    <property type="match status" value="1"/>
</dbReference>
<dbReference type="SUPFAM" id="SSF57716">
    <property type="entry name" value="Glucocorticoid receptor-like (DNA-binding domain)"/>
    <property type="match status" value="1"/>
</dbReference>
<dbReference type="SUPFAM" id="SSF81624">
    <property type="entry name" value="N-terminal domain of MutM-like DNA repair proteins"/>
    <property type="match status" value="1"/>
</dbReference>
<dbReference type="SUPFAM" id="SSF46946">
    <property type="entry name" value="S13-like H2TH domain"/>
    <property type="match status" value="1"/>
</dbReference>
<dbReference type="PROSITE" id="PS51068">
    <property type="entry name" value="FPG_CAT"/>
    <property type="match status" value="1"/>
</dbReference>
<dbReference type="PROSITE" id="PS51066">
    <property type="entry name" value="ZF_FPG_2"/>
    <property type="match status" value="1"/>
</dbReference>
<accession>A1SR12</accession>
<protein>
    <recommendedName>
        <fullName evidence="2">Formamidopyrimidine-DNA glycosylase</fullName>
        <shortName evidence="2">Fapy-DNA glycosylase</shortName>
        <ecNumber evidence="2">3.2.2.23</ecNumber>
    </recommendedName>
    <alternativeName>
        <fullName evidence="2">DNA-(apurinic or apyrimidinic site) lyase MutM</fullName>
        <shortName evidence="2">AP lyase MutM</shortName>
        <ecNumber evidence="2">4.2.99.18</ecNumber>
    </alternativeName>
</protein>
<sequence>MPELPEVETSRKGISPHLINKSVQNVVLRHTQLRWKIPQDLLSDIKDKILLSIDRRAKYLLFNFTSGTLLIHLGMSGSLRICPLNSPPKKHDHADLIFADCLLRYTDPRRFGAILWLGLTPEDSPLLNKLGPEPLNDDFNAKYLYQQATKRKLPVKQFIMDQKVVTGVGNIYATEALFNSGISPIRAAGNISEKRYQILVTEIKEILQQAIKQGGTTLKDFVGSDGKPGYFQQTLQVYGKTGQQCPSCETPLKAVKLAARASVYCPECQS</sequence>
<evidence type="ECO:0000250" key="1"/>
<evidence type="ECO:0000255" key="2">
    <source>
        <dbReference type="HAMAP-Rule" id="MF_00103"/>
    </source>
</evidence>
<name>FPG_PSYIN</name>
<feature type="initiator methionine" description="Removed" evidence="1">
    <location>
        <position position="1"/>
    </location>
</feature>
<feature type="chain" id="PRO_1000008747" description="Formamidopyrimidine-DNA glycosylase">
    <location>
        <begin position="2"/>
        <end position="270"/>
    </location>
</feature>
<feature type="zinc finger region" description="FPG-type" evidence="2">
    <location>
        <begin position="236"/>
        <end position="270"/>
    </location>
</feature>
<feature type="active site" description="Schiff-base intermediate with DNA" evidence="2">
    <location>
        <position position="2"/>
    </location>
</feature>
<feature type="active site" description="Proton donor" evidence="2">
    <location>
        <position position="3"/>
    </location>
</feature>
<feature type="active site" description="Proton donor; for beta-elimination activity" evidence="2">
    <location>
        <position position="58"/>
    </location>
</feature>
<feature type="active site" description="Proton donor; for delta-elimination activity" evidence="2">
    <location>
        <position position="260"/>
    </location>
</feature>
<feature type="binding site" evidence="2">
    <location>
        <position position="91"/>
    </location>
    <ligand>
        <name>DNA</name>
        <dbReference type="ChEBI" id="CHEBI:16991"/>
    </ligand>
</feature>
<feature type="binding site" evidence="2">
    <location>
        <position position="109"/>
    </location>
    <ligand>
        <name>DNA</name>
        <dbReference type="ChEBI" id="CHEBI:16991"/>
    </ligand>
</feature>
<feature type="binding site" evidence="2">
    <location>
        <position position="151"/>
    </location>
    <ligand>
        <name>DNA</name>
        <dbReference type="ChEBI" id="CHEBI:16991"/>
    </ligand>
</feature>
<gene>
    <name evidence="2" type="primary">mutM</name>
    <name evidence="2" type="synonym">fpg</name>
    <name type="ordered locus">Ping_0053</name>
</gene>